<comment type="function">
    <text evidence="1">Catalyzes the ATP-dependent conversion of 7-carboxy-7-deazaguanine (CDG) to 7-cyano-7-deazaguanine (preQ(0)).</text>
</comment>
<comment type="catalytic activity">
    <reaction evidence="1">
        <text>7-carboxy-7-deazaguanine + NH4(+) + ATP = 7-cyano-7-deazaguanine + ADP + phosphate + H2O + H(+)</text>
        <dbReference type="Rhea" id="RHEA:27982"/>
        <dbReference type="ChEBI" id="CHEBI:15377"/>
        <dbReference type="ChEBI" id="CHEBI:15378"/>
        <dbReference type="ChEBI" id="CHEBI:28938"/>
        <dbReference type="ChEBI" id="CHEBI:30616"/>
        <dbReference type="ChEBI" id="CHEBI:43474"/>
        <dbReference type="ChEBI" id="CHEBI:45075"/>
        <dbReference type="ChEBI" id="CHEBI:61036"/>
        <dbReference type="ChEBI" id="CHEBI:456216"/>
        <dbReference type="EC" id="6.3.4.20"/>
    </reaction>
</comment>
<comment type="cofactor">
    <cofactor evidence="1">
        <name>Zn(2+)</name>
        <dbReference type="ChEBI" id="CHEBI:29105"/>
    </cofactor>
    <text evidence="1">Binds 1 zinc ion per subunit.</text>
</comment>
<comment type="pathway">
    <text evidence="1">Purine metabolism; 7-cyano-7-deazaguanine biosynthesis.</text>
</comment>
<comment type="similarity">
    <text evidence="1">Belongs to the QueC family.</text>
</comment>
<keyword id="KW-0067">ATP-binding</keyword>
<keyword id="KW-0436">Ligase</keyword>
<keyword id="KW-0479">Metal-binding</keyword>
<keyword id="KW-0547">Nucleotide-binding</keyword>
<keyword id="KW-0671">Queuosine biosynthesis</keyword>
<keyword id="KW-1185">Reference proteome</keyword>
<keyword id="KW-0862">Zinc</keyword>
<dbReference type="EC" id="6.3.4.20" evidence="1"/>
<dbReference type="EMBL" id="CP000655">
    <property type="protein sequence ID" value="ABP33493.1"/>
    <property type="molecule type" value="Genomic_DNA"/>
</dbReference>
<dbReference type="RefSeq" id="WP_011902118.1">
    <property type="nucleotide sequence ID" value="NC_009379.1"/>
</dbReference>
<dbReference type="SMR" id="A4SVH9"/>
<dbReference type="GeneID" id="31480622"/>
<dbReference type="KEGG" id="pnu:Pnuc_0272"/>
<dbReference type="eggNOG" id="COG0603">
    <property type="taxonomic scope" value="Bacteria"/>
</dbReference>
<dbReference type="HOGENOM" id="CLU_081854_1_1_4"/>
<dbReference type="UniPathway" id="UPA00391"/>
<dbReference type="Proteomes" id="UP000000231">
    <property type="component" value="Chromosome"/>
</dbReference>
<dbReference type="GO" id="GO:0005524">
    <property type="term" value="F:ATP binding"/>
    <property type="evidence" value="ECO:0007669"/>
    <property type="project" value="UniProtKB-UniRule"/>
</dbReference>
<dbReference type="GO" id="GO:0016879">
    <property type="term" value="F:ligase activity, forming carbon-nitrogen bonds"/>
    <property type="evidence" value="ECO:0007669"/>
    <property type="project" value="UniProtKB-UniRule"/>
</dbReference>
<dbReference type="GO" id="GO:0008270">
    <property type="term" value="F:zinc ion binding"/>
    <property type="evidence" value="ECO:0007669"/>
    <property type="project" value="UniProtKB-UniRule"/>
</dbReference>
<dbReference type="GO" id="GO:0008616">
    <property type="term" value="P:queuosine biosynthetic process"/>
    <property type="evidence" value="ECO:0007669"/>
    <property type="project" value="UniProtKB-UniRule"/>
</dbReference>
<dbReference type="CDD" id="cd01995">
    <property type="entry name" value="QueC-like"/>
    <property type="match status" value="1"/>
</dbReference>
<dbReference type="Gene3D" id="3.40.50.620">
    <property type="entry name" value="HUPs"/>
    <property type="match status" value="1"/>
</dbReference>
<dbReference type="HAMAP" id="MF_01633">
    <property type="entry name" value="QueC"/>
    <property type="match status" value="1"/>
</dbReference>
<dbReference type="InterPro" id="IPR018317">
    <property type="entry name" value="QueC"/>
</dbReference>
<dbReference type="InterPro" id="IPR014729">
    <property type="entry name" value="Rossmann-like_a/b/a_fold"/>
</dbReference>
<dbReference type="NCBIfam" id="TIGR00364">
    <property type="entry name" value="7-cyano-7-deazaguanine synthase QueC"/>
    <property type="match status" value="1"/>
</dbReference>
<dbReference type="PANTHER" id="PTHR42914">
    <property type="entry name" value="7-CYANO-7-DEAZAGUANINE SYNTHASE"/>
    <property type="match status" value="1"/>
</dbReference>
<dbReference type="PANTHER" id="PTHR42914:SF1">
    <property type="entry name" value="7-CYANO-7-DEAZAGUANINE SYNTHASE"/>
    <property type="match status" value="1"/>
</dbReference>
<dbReference type="Pfam" id="PF06508">
    <property type="entry name" value="QueC"/>
    <property type="match status" value="1"/>
</dbReference>
<dbReference type="PIRSF" id="PIRSF006293">
    <property type="entry name" value="ExsB"/>
    <property type="match status" value="1"/>
</dbReference>
<dbReference type="SUPFAM" id="SSF52402">
    <property type="entry name" value="Adenine nucleotide alpha hydrolases-like"/>
    <property type="match status" value="1"/>
</dbReference>
<organism>
    <name type="scientific">Polynucleobacter asymbioticus (strain DSM 18221 / CIP 109841 / QLW-P1DMWA-1)</name>
    <name type="common">Polynucleobacter necessarius subsp. asymbioticus</name>
    <dbReference type="NCBI Taxonomy" id="312153"/>
    <lineage>
        <taxon>Bacteria</taxon>
        <taxon>Pseudomonadati</taxon>
        <taxon>Pseudomonadota</taxon>
        <taxon>Betaproteobacteria</taxon>
        <taxon>Burkholderiales</taxon>
        <taxon>Burkholderiaceae</taxon>
        <taxon>Polynucleobacter</taxon>
    </lineage>
</organism>
<feature type="chain" id="PRO_0000336929" description="7-cyano-7-deazaguanine synthase">
    <location>
        <begin position="1"/>
        <end position="246"/>
    </location>
</feature>
<feature type="binding site" evidence="1">
    <location>
        <begin position="24"/>
        <end position="34"/>
    </location>
    <ligand>
        <name>ATP</name>
        <dbReference type="ChEBI" id="CHEBI:30616"/>
    </ligand>
</feature>
<feature type="binding site" evidence="1">
    <location>
        <position position="209"/>
    </location>
    <ligand>
        <name>Zn(2+)</name>
        <dbReference type="ChEBI" id="CHEBI:29105"/>
    </ligand>
</feature>
<feature type="binding site" evidence="1">
    <location>
        <position position="219"/>
    </location>
    <ligand>
        <name>Zn(2+)</name>
        <dbReference type="ChEBI" id="CHEBI:29105"/>
    </ligand>
</feature>
<feature type="binding site" evidence="1">
    <location>
        <position position="222"/>
    </location>
    <ligand>
        <name>Zn(2+)</name>
        <dbReference type="ChEBI" id="CHEBI:29105"/>
    </ligand>
</feature>
<feature type="binding site" evidence="1">
    <location>
        <position position="225"/>
    </location>
    <ligand>
        <name>Zn(2+)</name>
        <dbReference type="ChEBI" id="CHEBI:29105"/>
    </ligand>
</feature>
<accession>A4SVH9</accession>
<sequence>MSSLSAAYQNLAPRKDGAPAVILFSGGLDSTTVLALAKDLGYTPYALSVGYGQRHSSELAAAKHIAKQIGVARHEVVNLDLTRFGGSALTDSSIAVPTTPGKDQEIPVTYVPARNTILLSLALGWAESLGGLDVFYGANSVDYSGYPDCRPEYVASFETMANLATKAGVEAINNENRFRVHAPIISLTKAEIIQLGSTLGVDYSQTVSCYQANDLGEACGECESCRLRQIGFKQANVIDPTRYQKK</sequence>
<gene>
    <name evidence="1" type="primary">queC</name>
    <name type="ordered locus">Pnuc_0272</name>
</gene>
<proteinExistence type="inferred from homology"/>
<evidence type="ECO:0000255" key="1">
    <source>
        <dbReference type="HAMAP-Rule" id="MF_01633"/>
    </source>
</evidence>
<name>QUEC_POLAQ</name>
<protein>
    <recommendedName>
        <fullName evidence="1">7-cyano-7-deazaguanine synthase</fullName>
        <ecNumber evidence="1">6.3.4.20</ecNumber>
    </recommendedName>
    <alternativeName>
        <fullName evidence="1">7-cyano-7-carbaguanine synthase</fullName>
    </alternativeName>
    <alternativeName>
        <fullName evidence="1">PreQ(0) synthase</fullName>
    </alternativeName>
    <alternativeName>
        <fullName evidence="1">Queuosine biosynthesis protein QueC</fullName>
    </alternativeName>
</protein>
<reference key="1">
    <citation type="journal article" date="2012" name="Stand. Genomic Sci.">
        <title>Complete genome sequence of Polynucleobacter necessarius subsp. asymbioticus type strain (QLW-P1DMWA-1(T)).</title>
        <authorList>
            <person name="Meincke L."/>
            <person name="Copeland A."/>
            <person name="Lapidus A."/>
            <person name="Lucas S."/>
            <person name="Berry K.W."/>
            <person name="Del Rio T.G."/>
            <person name="Hammon N."/>
            <person name="Dalin E."/>
            <person name="Tice H."/>
            <person name="Pitluck S."/>
            <person name="Richardson P."/>
            <person name="Bruce D."/>
            <person name="Goodwin L."/>
            <person name="Han C."/>
            <person name="Tapia R."/>
            <person name="Detter J.C."/>
            <person name="Schmutz J."/>
            <person name="Brettin T."/>
            <person name="Larimer F."/>
            <person name="Land M."/>
            <person name="Hauser L."/>
            <person name="Kyrpides N.C."/>
            <person name="Ivanova N."/>
            <person name="Goker M."/>
            <person name="Woyke T."/>
            <person name="Wu Q.L."/>
            <person name="Pockl M."/>
            <person name="Hahn M.W."/>
            <person name="Klenk H.P."/>
        </authorList>
    </citation>
    <scope>NUCLEOTIDE SEQUENCE [LARGE SCALE GENOMIC DNA]</scope>
    <source>
        <strain>DSM 18221 / CIP 109841 / QLW-P1DMWA-1</strain>
    </source>
</reference>